<name>SYDND_RHOP2</name>
<dbReference type="EC" id="6.1.1.23" evidence="1"/>
<dbReference type="EMBL" id="CP000250">
    <property type="protein sequence ID" value="ABD07201.1"/>
    <property type="molecule type" value="Genomic_DNA"/>
</dbReference>
<dbReference type="RefSeq" id="WP_011441386.1">
    <property type="nucleotide sequence ID" value="NC_007778.1"/>
</dbReference>
<dbReference type="SMR" id="Q2IX59"/>
<dbReference type="STRING" id="316058.RPB_2496"/>
<dbReference type="KEGG" id="rpb:RPB_2496"/>
<dbReference type="eggNOG" id="COG0173">
    <property type="taxonomic scope" value="Bacteria"/>
</dbReference>
<dbReference type="HOGENOM" id="CLU_014330_3_2_5"/>
<dbReference type="OrthoDB" id="9802326at2"/>
<dbReference type="Proteomes" id="UP000008809">
    <property type="component" value="Chromosome"/>
</dbReference>
<dbReference type="GO" id="GO:0005737">
    <property type="term" value="C:cytoplasm"/>
    <property type="evidence" value="ECO:0007669"/>
    <property type="project" value="UniProtKB-SubCell"/>
</dbReference>
<dbReference type="GO" id="GO:0004815">
    <property type="term" value="F:aspartate-tRNA ligase activity"/>
    <property type="evidence" value="ECO:0007669"/>
    <property type="project" value="UniProtKB-UniRule"/>
</dbReference>
<dbReference type="GO" id="GO:0050560">
    <property type="term" value="F:aspartate-tRNA(Asn) ligase activity"/>
    <property type="evidence" value="ECO:0007669"/>
    <property type="project" value="UniProtKB-EC"/>
</dbReference>
<dbReference type="GO" id="GO:0005524">
    <property type="term" value="F:ATP binding"/>
    <property type="evidence" value="ECO:0007669"/>
    <property type="project" value="UniProtKB-UniRule"/>
</dbReference>
<dbReference type="GO" id="GO:0003676">
    <property type="term" value="F:nucleic acid binding"/>
    <property type="evidence" value="ECO:0007669"/>
    <property type="project" value="InterPro"/>
</dbReference>
<dbReference type="GO" id="GO:0006422">
    <property type="term" value="P:aspartyl-tRNA aminoacylation"/>
    <property type="evidence" value="ECO:0007669"/>
    <property type="project" value="UniProtKB-UniRule"/>
</dbReference>
<dbReference type="CDD" id="cd00777">
    <property type="entry name" value="AspRS_core"/>
    <property type="match status" value="1"/>
</dbReference>
<dbReference type="CDD" id="cd04317">
    <property type="entry name" value="EcAspRS_like_N"/>
    <property type="match status" value="1"/>
</dbReference>
<dbReference type="Gene3D" id="3.30.930.10">
    <property type="entry name" value="Bira Bifunctional Protein, Domain 2"/>
    <property type="match status" value="1"/>
</dbReference>
<dbReference type="Gene3D" id="3.30.1360.30">
    <property type="entry name" value="GAD-like domain"/>
    <property type="match status" value="1"/>
</dbReference>
<dbReference type="Gene3D" id="2.40.50.140">
    <property type="entry name" value="Nucleic acid-binding proteins"/>
    <property type="match status" value="1"/>
</dbReference>
<dbReference type="HAMAP" id="MF_00044">
    <property type="entry name" value="Asp_tRNA_synth_type1"/>
    <property type="match status" value="1"/>
</dbReference>
<dbReference type="InterPro" id="IPR004364">
    <property type="entry name" value="Aa-tRNA-synt_II"/>
</dbReference>
<dbReference type="InterPro" id="IPR006195">
    <property type="entry name" value="aa-tRNA-synth_II"/>
</dbReference>
<dbReference type="InterPro" id="IPR045864">
    <property type="entry name" value="aa-tRNA-synth_II/BPL/LPL"/>
</dbReference>
<dbReference type="InterPro" id="IPR004524">
    <property type="entry name" value="Asp-tRNA-ligase_1"/>
</dbReference>
<dbReference type="InterPro" id="IPR047089">
    <property type="entry name" value="Asp-tRNA-ligase_1_N"/>
</dbReference>
<dbReference type="InterPro" id="IPR002312">
    <property type="entry name" value="Asp/Asn-tRNA-synth_IIb"/>
</dbReference>
<dbReference type="InterPro" id="IPR047090">
    <property type="entry name" value="AspRS_core"/>
</dbReference>
<dbReference type="InterPro" id="IPR004115">
    <property type="entry name" value="GAD-like_sf"/>
</dbReference>
<dbReference type="InterPro" id="IPR029351">
    <property type="entry name" value="GAD_dom"/>
</dbReference>
<dbReference type="InterPro" id="IPR012340">
    <property type="entry name" value="NA-bd_OB-fold"/>
</dbReference>
<dbReference type="InterPro" id="IPR004365">
    <property type="entry name" value="NA-bd_OB_tRNA"/>
</dbReference>
<dbReference type="NCBIfam" id="TIGR00459">
    <property type="entry name" value="aspS_bact"/>
    <property type="match status" value="1"/>
</dbReference>
<dbReference type="NCBIfam" id="NF001750">
    <property type="entry name" value="PRK00476.1"/>
    <property type="match status" value="1"/>
</dbReference>
<dbReference type="PANTHER" id="PTHR22594:SF5">
    <property type="entry name" value="ASPARTATE--TRNA LIGASE, MITOCHONDRIAL"/>
    <property type="match status" value="1"/>
</dbReference>
<dbReference type="PANTHER" id="PTHR22594">
    <property type="entry name" value="ASPARTYL/LYSYL-TRNA SYNTHETASE"/>
    <property type="match status" value="1"/>
</dbReference>
<dbReference type="Pfam" id="PF02938">
    <property type="entry name" value="GAD"/>
    <property type="match status" value="1"/>
</dbReference>
<dbReference type="Pfam" id="PF00152">
    <property type="entry name" value="tRNA-synt_2"/>
    <property type="match status" value="1"/>
</dbReference>
<dbReference type="Pfam" id="PF01336">
    <property type="entry name" value="tRNA_anti-codon"/>
    <property type="match status" value="1"/>
</dbReference>
<dbReference type="PRINTS" id="PR01042">
    <property type="entry name" value="TRNASYNTHASP"/>
</dbReference>
<dbReference type="SUPFAM" id="SSF55681">
    <property type="entry name" value="Class II aaRS and biotin synthetases"/>
    <property type="match status" value="1"/>
</dbReference>
<dbReference type="SUPFAM" id="SSF55261">
    <property type="entry name" value="GAD domain-like"/>
    <property type="match status" value="1"/>
</dbReference>
<dbReference type="SUPFAM" id="SSF50249">
    <property type="entry name" value="Nucleic acid-binding proteins"/>
    <property type="match status" value="1"/>
</dbReference>
<dbReference type="PROSITE" id="PS50862">
    <property type="entry name" value="AA_TRNA_LIGASE_II"/>
    <property type="match status" value="1"/>
</dbReference>
<protein>
    <recommendedName>
        <fullName evidence="1">Aspartate--tRNA(Asp/Asn) ligase</fullName>
        <ecNumber evidence="1">6.1.1.23</ecNumber>
    </recommendedName>
    <alternativeName>
        <fullName evidence="1">Aspartyl-tRNA synthetase</fullName>
        <shortName evidence="1">AspRS</shortName>
    </alternativeName>
    <alternativeName>
        <fullName evidence="1">Non-discriminating aspartyl-tRNA synthetase</fullName>
        <shortName evidence="1">ND-AspRS</shortName>
    </alternativeName>
</protein>
<comment type="function">
    <text evidence="1">Aspartyl-tRNA synthetase with relaxed tRNA specificity since it is able to aspartylate not only its cognate tRNA(Asp) but also tRNA(Asn). Reaction proceeds in two steps: L-aspartate is first activated by ATP to form Asp-AMP and then transferred to the acceptor end of tRNA(Asp/Asn).</text>
</comment>
<comment type="catalytic activity">
    <reaction evidence="1">
        <text>tRNA(Asx) + L-aspartate + ATP = L-aspartyl-tRNA(Asx) + AMP + diphosphate</text>
        <dbReference type="Rhea" id="RHEA:18349"/>
        <dbReference type="Rhea" id="RHEA-COMP:9710"/>
        <dbReference type="Rhea" id="RHEA-COMP:9711"/>
        <dbReference type="ChEBI" id="CHEBI:29991"/>
        <dbReference type="ChEBI" id="CHEBI:30616"/>
        <dbReference type="ChEBI" id="CHEBI:33019"/>
        <dbReference type="ChEBI" id="CHEBI:78442"/>
        <dbReference type="ChEBI" id="CHEBI:78516"/>
        <dbReference type="ChEBI" id="CHEBI:456215"/>
        <dbReference type="EC" id="6.1.1.23"/>
    </reaction>
</comment>
<comment type="subunit">
    <text evidence="1">Homodimer.</text>
</comment>
<comment type="subcellular location">
    <subcellularLocation>
        <location evidence="1">Cytoplasm</location>
    </subcellularLocation>
</comment>
<comment type="similarity">
    <text evidence="1">Belongs to the class-II aminoacyl-tRNA synthetase family. Type 1 subfamily.</text>
</comment>
<organism>
    <name type="scientific">Rhodopseudomonas palustris (strain HaA2)</name>
    <dbReference type="NCBI Taxonomy" id="316058"/>
    <lineage>
        <taxon>Bacteria</taxon>
        <taxon>Pseudomonadati</taxon>
        <taxon>Pseudomonadota</taxon>
        <taxon>Alphaproteobacteria</taxon>
        <taxon>Hyphomicrobiales</taxon>
        <taxon>Nitrobacteraceae</taxon>
        <taxon>Rhodopseudomonas</taxon>
    </lineage>
</organism>
<proteinExistence type="inferred from homology"/>
<gene>
    <name evidence="1" type="primary">aspS</name>
    <name type="ordered locus">RPB_2496</name>
</gene>
<evidence type="ECO:0000255" key="1">
    <source>
        <dbReference type="HAMAP-Rule" id="MF_00044"/>
    </source>
</evidence>
<keyword id="KW-0030">Aminoacyl-tRNA synthetase</keyword>
<keyword id="KW-0067">ATP-binding</keyword>
<keyword id="KW-0963">Cytoplasm</keyword>
<keyword id="KW-0436">Ligase</keyword>
<keyword id="KW-0547">Nucleotide-binding</keyword>
<keyword id="KW-0648">Protein biosynthesis</keyword>
<keyword id="KW-1185">Reference proteome</keyword>
<accession>Q2IX59</accession>
<reference key="1">
    <citation type="submission" date="2006-01" db="EMBL/GenBank/DDBJ databases">
        <title>Complete sequence of Rhodopseudomonas palustris HaA2.</title>
        <authorList>
            <consortium name="US DOE Joint Genome Institute"/>
            <person name="Copeland A."/>
            <person name="Lucas S."/>
            <person name="Lapidus A."/>
            <person name="Barry K."/>
            <person name="Detter J.C."/>
            <person name="Glavina T."/>
            <person name="Hammon N."/>
            <person name="Israni S."/>
            <person name="Pitluck S."/>
            <person name="Chain P."/>
            <person name="Malfatti S."/>
            <person name="Shin M."/>
            <person name="Vergez L."/>
            <person name="Schmutz J."/>
            <person name="Larimer F."/>
            <person name="Land M."/>
            <person name="Hauser L."/>
            <person name="Pelletier D.A."/>
            <person name="Kyrpides N."/>
            <person name="Anderson I."/>
            <person name="Oda Y."/>
            <person name="Harwood C.S."/>
            <person name="Richardson P."/>
        </authorList>
    </citation>
    <scope>NUCLEOTIDE SEQUENCE [LARGE SCALE GENOMIC DNA]</scope>
    <source>
        <strain>HaA2</strain>
    </source>
</reference>
<sequence>MHRYRTHTCGALRDSDIDQTVRVSGWCHRIRDHGGLLFIDLRDHYGLTQCVADPDSPAFKDAEKLRAEWVVRIDGRVRRRPEGTDNDDLPTGKVEIFITEIEVLGPAGELPLPVFGEQDYPEDVRLRYRFLDLRREKLHQNIMTRGAIVDAMRKRMKEQGFFEFQTPILTASSPEGARDFLVPSRIHPGKFYALPQAPQQYKQLLMMSGFDRYFQIAPCFRDEDPRADRLPGEFYQLDVEMSFVTQDDVFAAMEPVITGVFEDFAKGKPVTKSWPRIPYFESLRKYGTDKPDLRNPLEMQDVSEHFRGSGFKVFARMLEEERNQVWAIPGPGGGSRAFCDRMNSWAQGEGQPGLGYIMWREGNEGAGPLANNIGPERTEAIRVALGLKAGDAAFFVAGDPAKFVKFAGLARTKVGEELNLIDKDQFALAWVVDFPMYEYNEDDKKVDFSHNPFSMPQGGMDALTSQDPLTIKAFQYDITCNGYEIASGGIRNHRPEAMVKAFEIAGYGEQEVIDRFGGMYRAFQYGAPPHGGMAAGVDRIVMLLCGTNNLREISLFPMNQRAEDLLMGAPSQVAPKQLRELHIRLNLPES</sequence>
<feature type="chain" id="PRO_1000006738" description="Aspartate--tRNA(Asp/Asn) ligase">
    <location>
        <begin position="1"/>
        <end position="590"/>
    </location>
</feature>
<feature type="region of interest" description="Aspartate" evidence="1">
    <location>
        <begin position="199"/>
        <end position="202"/>
    </location>
</feature>
<feature type="binding site" evidence="1">
    <location>
        <position position="175"/>
    </location>
    <ligand>
        <name>L-aspartate</name>
        <dbReference type="ChEBI" id="CHEBI:29991"/>
    </ligand>
</feature>
<feature type="binding site" evidence="1">
    <location>
        <begin position="221"/>
        <end position="223"/>
    </location>
    <ligand>
        <name>ATP</name>
        <dbReference type="ChEBI" id="CHEBI:30616"/>
    </ligand>
</feature>
<feature type="binding site" evidence="1">
    <location>
        <position position="221"/>
    </location>
    <ligand>
        <name>L-aspartate</name>
        <dbReference type="ChEBI" id="CHEBI:29991"/>
    </ligand>
</feature>
<feature type="binding site" evidence="1">
    <location>
        <position position="450"/>
    </location>
    <ligand>
        <name>L-aspartate</name>
        <dbReference type="ChEBI" id="CHEBI:29991"/>
    </ligand>
</feature>
<feature type="binding site" evidence="1">
    <location>
        <position position="484"/>
    </location>
    <ligand>
        <name>ATP</name>
        <dbReference type="ChEBI" id="CHEBI:30616"/>
    </ligand>
</feature>
<feature type="binding site" evidence="1">
    <location>
        <position position="491"/>
    </location>
    <ligand>
        <name>L-aspartate</name>
        <dbReference type="ChEBI" id="CHEBI:29991"/>
    </ligand>
</feature>
<feature type="binding site" evidence="1">
    <location>
        <begin position="536"/>
        <end position="539"/>
    </location>
    <ligand>
        <name>ATP</name>
        <dbReference type="ChEBI" id="CHEBI:30616"/>
    </ligand>
</feature>
<feature type="site" description="Important for tRNA non-discrimination" evidence="1">
    <location>
        <position position="33"/>
    </location>
</feature>
<feature type="site" description="Important for tRNA non-discrimination" evidence="1">
    <location>
        <position position="83"/>
    </location>
</feature>